<name>BRKP1_AGACL</name>
<organism evidence="7">
    <name type="scientific">Agalychnis callidryas</name>
    <name type="common">Red-eyed tree frog</name>
    <name type="synonym">Phyllomedusa callidryas</name>
    <dbReference type="NCBI Taxonomy" id="197464"/>
    <lineage>
        <taxon>Eukaryota</taxon>
        <taxon>Metazoa</taxon>
        <taxon>Chordata</taxon>
        <taxon>Craniata</taxon>
        <taxon>Vertebrata</taxon>
        <taxon>Euteleostomi</taxon>
        <taxon>Amphibia</taxon>
        <taxon>Batrachia</taxon>
        <taxon>Anura</taxon>
        <taxon>Neobatrachia</taxon>
        <taxon>Hyloidea</taxon>
        <taxon>Hylidae</taxon>
        <taxon>Phyllomedusinae</taxon>
        <taxon>Agalychnis</taxon>
    </lineage>
</organism>
<dbReference type="EMBL" id="HE967330">
    <property type="protein sequence ID" value="CCJ67651.1"/>
    <property type="molecule type" value="mRNA"/>
</dbReference>
<dbReference type="GO" id="GO:0005576">
    <property type="term" value="C:extracellular region"/>
    <property type="evidence" value="ECO:0000314"/>
    <property type="project" value="UniProtKB"/>
</dbReference>
<dbReference type="GO" id="GO:0090729">
    <property type="term" value="F:toxin activity"/>
    <property type="evidence" value="ECO:0007669"/>
    <property type="project" value="UniProtKB-KW"/>
</dbReference>
<dbReference type="GO" id="GO:0006952">
    <property type="term" value="P:defense response"/>
    <property type="evidence" value="ECO:0007669"/>
    <property type="project" value="UniProtKB-KW"/>
</dbReference>
<dbReference type="GO" id="GO:0042311">
    <property type="term" value="P:vasodilation"/>
    <property type="evidence" value="ECO:0007669"/>
    <property type="project" value="UniProtKB-KW"/>
</dbReference>
<dbReference type="InterPro" id="IPR004275">
    <property type="entry name" value="Frog_antimicrobial_propeptide"/>
</dbReference>
<dbReference type="Pfam" id="PF03032">
    <property type="entry name" value="FSAP_sig_propep"/>
    <property type="match status" value="1"/>
</dbReference>
<comment type="function">
    <molecule>[Thr6]-bradykinin</molecule>
    <text evidence="3">Induces relaxation of rat smooth muscle from tail artery (EC(50)=16.8 nM) and contraction of that from ileum (EC(50)=205 nM), urinary bladder (EC(50)=895 nM) and uterus (EC(50)=60.3 nM). Binds to both bradykinin receptor B1 (BDKRB1) and B2 (BDKRB2).</text>
</comment>
<comment type="function">
    <text evidence="3">[Hyp3,Thr6]-bradykinin: Induces relaxation of rat smooth muscle from tail artery (EC(50)=56.7 nM) and contraction of that from ileum (EC(50)=588 nM), urinary bladder (EC(50)=4.6 uM) and uterus (EC(50)=3.9 nM). Binds to both bradykinin receptor B1 (BDKRB1) and B2 (BDKRB2). In arterial smooth muscle, the effect via BDKRB1 is stronger, in uterus, ileum and urinary bladder that via BDKRB2.</text>
</comment>
<comment type="function">
    <molecule>[Thr6]-bradykinyl-Val,Asp</molecule>
    <text evidence="3">Induces relaxation of rat smooth muscle from tail artery (EC(50)=10.8 nM) and contraction of that from ileum (EC(50)=645 nM), urinary bladder (EC(50)=1.1 uM) and uterus (EC(50)=1.2 uM). Binds to both bradykinin receptor B1 (BDKRB1) and B2 (BDKRB2). Apart from uterus smooth muscle, the effect via B2 is stronger.</text>
</comment>
<comment type="function">
    <text evidence="3">[Hyp3,Thr6]-bradykinyl-Val,Asp: Induces relaxation of rat smooth muscle from tail artery (EC(50)=3.5 nM) and contraction of that from ileum (EC(50)=223 nM), urinary bladder (EC(50)=1.5 uM) and uterus (EC(50)=356 nM). Binds to both bradykinin receptor B1 (BDKRB1) and B2 (BDKRB2); the effects via B2 a stronger.</text>
</comment>
<comment type="subcellular location">
    <subcellularLocation>
        <location evidence="1 3">Secreted</location>
    </subcellularLocation>
</comment>
<comment type="tissue specificity">
    <text evidence="3">Expressed by the skin glands.</text>
</comment>
<comment type="mass spectrometry">
    <molecule>[Thr6]-bradykinyl-Val,Asp</molecule>
    <text>[Hyp3,Thr6]-bradykinyl-Val,Asp.</text>
</comment>
<comment type="mass spectrometry">
    <molecule>[Thr6]-bradykinyl-Val,Asp</molecule>
    <text>[Thr6]-bradykinyl-Val,Asp.</text>
</comment>
<comment type="mass spectrometry">
    <molecule>[Thr6]-bradykinin</molecule>
    <text>[Hyp3,Thr6]-bradykinin.</text>
</comment>
<comment type="mass spectrometry">
    <molecule>[Thr6]-bradykinin</molecule>
    <text>Thr6-bradykinin.</text>
</comment>
<comment type="similarity">
    <text evidence="5">Belongs to the frog skin active peptide (FSAP) family. Bradykinin-related peptide subfamily.</text>
</comment>
<reference evidence="7" key="1">
    <citation type="journal article" date="2014" name="Peptides">
        <title>Bradykinin-related peptides (BRPs) from skin secretions of three genera of phyllomedusine leaf frogs and their comparative pharmacological effects on mammalian smooth muscles.</title>
        <authorList>
            <person name="Jiang Y."/>
            <person name="Xi X."/>
            <person name="Ge L."/>
            <person name="Yang N."/>
            <person name="Hou X."/>
            <person name="Ma J."/>
            <person name="Ma C."/>
            <person name="Wu Y."/>
            <person name="Guo X."/>
            <person name="Li R."/>
            <person name="Zhou M."/>
            <person name="Wang L."/>
            <person name="Chen T."/>
            <person name="Shaw C."/>
        </authorList>
    </citation>
    <scope>NUCLEOTIDE SEQUENCE [MRNA]</scope>
    <scope>PROTEIN SEQUENCE OF 51-61</scope>
    <scope>FUNCTION</scope>
    <scope>SUBCELLULAR LOCATION</scope>
    <scope>TISSUE SPECIFICITY</scope>
    <scope>MASS SPECTROMETRY</scope>
    <scope>HYDROXYLATION AT PRO-53</scope>
    <scope>IDENTIFICATION BY MASS SPECTROMETRY</scope>
    <source>
        <tissue evidence="7">Skin</tissue>
        <tissue evidence="4">Skin secretion</tissue>
    </source>
</reference>
<keyword id="KW-0878">Amphibian defense peptide</keyword>
<keyword id="KW-0903">Direct protein sequencing</keyword>
<keyword id="KW-1213">G-protein coupled receptor impairing toxin</keyword>
<keyword id="KW-0379">Hydroxylation</keyword>
<keyword id="KW-0964">Secreted</keyword>
<keyword id="KW-0732">Signal</keyword>
<keyword id="KW-0800">Toxin</keyword>
<keyword id="KW-0838">Vasoactive</keyword>
<keyword id="KW-0840">Vasodilator</keyword>
<protein>
    <recommendedName>
        <fullName evidence="4">[Thr6]-bradykinyl-Val,Asp</fullName>
    </recommendedName>
    <alternativeName>
        <fullName evidence="4">Bradykinin-related peptide RD-11</fullName>
    </alternativeName>
    <component>
        <recommendedName>
            <fullName evidence="4">[Thr6]-bradykinin</fullName>
        </recommendedName>
    </component>
</protein>
<sequence>MSFLKKSLFLVLFLGLVSFSICEEEKRETEEEENEDEMDKESEEKRESPERPPGFTPFRVD</sequence>
<accession>L0PJV8</accession>
<proteinExistence type="evidence at protein level"/>
<evidence type="ECO:0000255" key="1"/>
<evidence type="ECO:0000256" key="2">
    <source>
        <dbReference type="SAM" id="MobiDB-lite"/>
    </source>
</evidence>
<evidence type="ECO:0000269" key="3">
    <source>
    </source>
</evidence>
<evidence type="ECO:0000303" key="4">
    <source>
    </source>
</evidence>
<evidence type="ECO:0000305" key="5"/>
<evidence type="ECO:0000305" key="6">
    <source>
    </source>
</evidence>
<evidence type="ECO:0000312" key="7">
    <source>
        <dbReference type="EMBL" id="CCJ67651.1"/>
    </source>
</evidence>
<feature type="signal peptide" evidence="1">
    <location>
        <begin position="1"/>
        <end position="22"/>
    </location>
</feature>
<feature type="propeptide" id="PRO_0000438936" evidence="6">
    <location>
        <begin position="23"/>
        <end position="50"/>
    </location>
</feature>
<feature type="peptide" id="PRO_0000438937" description="[Thr6]-bradykinyl-Val,Asp">
    <location>
        <begin position="51"/>
        <end position="61"/>
    </location>
</feature>
<feature type="peptide" id="PRO_0000438938" description="[Thr6]-bradykinin" evidence="3">
    <location>
        <begin position="51"/>
        <end position="59"/>
    </location>
</feature>
<feature type="region of interest" description="Disordered" evidence="2">
    <location>
        <begin position="24"/>
        <end position="61"/>
    </location>
</feature>
<feature type="compositionally biased region" description="Acidic residues" evidence="2">
    <location>
        <begin position="30"/>
        <end position="41"/>
    </location>
</feature>
<feature type="modified residue" description="4-hydroxyproline; in form [Hyp3,Thr6]-bradykinyl-Val,Asp and [Hyp3,Thr6]-bradykinin" evidence="3">
    <location>
        <position position="53"/>
    </location>
</feature>